<dbReference type="EC" id="3.1.26.4" evidence="1"/>
<dbReference type="EMBL" id="CP001407">
    <property type="protein sequence ID" value="ACO26662.1"/>
    <property type="molecule type" value="Genomic_DNA"/>
</dbReference>
<dbReference type="RefSeq" id="WP_001174721.1">
    <property type="nucleotide sequence ID" value="NZ_CP009318.1"/>
</dbReference>
<dbReference type="SMR" id="C1EP61"/>
<dbReference type="KEGG" id="bcx:BCA_3936"/>
<dbReference type="PATRIC" id="fig|572264.18.peg.3893"/>
<dbReference type="Proteomes" id="UP000002210">
    <property type="component" value="Chromosome"/>
</dbReference>
<dbReference type="GO" id="GO:0005737">
    <property type="term" value="C:cytoplasm"/>
    <property type="evidence" value="ECO:0007669"/>
    <property type="project" value="UniProtKB-SubCell"/>
</dbReference>
<dbReference type="GO" id="GO:0032299">
    <property type="term" value="C:ribonuclease H2 complex"/>
    <property type="evidence" value="ECO:0007669"/>
    <property type="project" value="TreeGrafter"/>
</dbReference>
<dbReference type="GO" id="GO:0030145">
    <property type="term" value="F:manganese ion binding"/>
    <property type="evidence" value="ECO:0007669"/>
    <property type="project" value="UniProtKB-UniRule"/>
</dbReference>
<dbReference type="GO" id="GO:0003723">
    <property type="term" value="F:RNA binding"/>
    <property type="evidence" value="ECO:0007669"/>
    <property type="project" value="InterPro"/>
</dbReference>
<dbReference type="GO" id="GO:0004523">
    <property type="term" value="F:RNA-DNA hybrid ribonuclease activity"/>
    <property type="evidence" value="ECO:0007669"/>
    <property type="project" value="UniProtKB-UniRule"/>
</dbReference>
<dbReference type="GO" id="GO:0043137">
    <property type="term" value="P:DNA replication, removal of RNA primer"/>
    <property type="evidence" value="ECO:0007669"/>
    <property type="project" value="TreeGrafter"/>
</dbReference>
<dbReference type="GO" id="GO:0006298">
    <property type="term" value="P:mismatch repair"/>
    <property type="evidence" value="ECO:0007669"/>
    <property type="project" value="TreeGrafter"/>
</dbReference>
<dbReference type="CDD" id="cd07182">
    <property type="entry name" value="RNase_HII_bacteria_HII_like"/>
    <property type="match status" value="1"/>
</dbReference>
<dbReference type="FunFam" id="3.30.420.10:FF:000006">
    <property type="entry name" value="Ribonuclease HII"/>
    <property type="match status" value="1"/>
</dbReference>
<dbReference type="Gene3D" id="3.30.420.10">
    <property type="entry name" value="Ribonuclease H-like superfamily/Ribonuclease H"/>
    <property type="match status" value="1"/>
</dbReference>
<dbReference type="HAMAP" id="MF_00052_B">
    <property type="entry name" value="RNase_HII_B"/>
    <property type="match status" value="1"/>
</dbReference>
<dbReference type="InterPro" id="IPR022898">
    <property type="entry name" value="RNase_HII"/>
</dbReference>
<dbReference type="InterPro" id="IPR001352">
    <property type="entry name" value="RNase_HII/HIII"/>
</dbReference>
<dbReference type="InterPro" id="IPR024567">
    <property type="entry name" value="RNase_HII/HIII_dom"/>
</dbReference>
<dbReference type="InterPro" id="IPR012337">
    <property type="entry name" value="RNaseH-like_sf"/>
</dbReference>
<dbReference type="InterPro" id="IPR036397">
    <property type="entry name" value="RNaseH_sf"/>
</dbReference>
<dbReference type="NCBIfam" id="NF000594">
    <property type="entry name" value="PRK00015.1-1"/>
    <property type="match status" value="1"/>
</dbReference>
<dbReference type="NCBIfam" id="NF000595">
    <property type="entry name" value="PRK00015.1-3"/>
    <property type="match status" value="1"/>
</dbReference>
<dbReference type="PANTHER" id="PTHR10954">
    <property type="entry name" value="RIBONUCLEASE H2 SUBUNIT A"/>
    <property type="match status" value="1"/>
</dbReference>
<dbReference type="PANTHER" id="PTHR10954:SF18">
    <property type="entry name" value="RIBONUCLEASE HII"/>
    <property type="match status" value="1"/>
</dbReference>
<dbReference type="Pfam" id="PF01351">
    <property type="entry name" value="RNase_HII"/>
    <property type="match status" value="1"/>
</dbReference>
<dbReference type="SUPFAM" id="SSF53098">
    <property type="entry name" value="Ribonuclease H-like"/>
    <property type="match status" value="1"/>
</dbReference>
<dbReference type="PROSITE" id="PS51975">
    <property type="entry name" value="RNASE_H_2"/>
    <property type="match status" value="1"/>
</dbReference>
<comment type="function">
    <text evidence="1">Endonuclease that specifically degrades the RNA of RNA-DNA hybrids.</text>
</comment>
<comment type="catalytic activity">
    <reaction evidence="1">
        <text>Endonucleolytic cleavage to 5'-phosphomonoester.</text>
        <dbReference type="EC" id="3.1.26.4"/>
    </reaction>
</comment>
<comment type="cofactor">
    <cofactor evidence="1">
        <name>Mn(2+)</name>
        <dbReference type="ChEBI" id="CHEBI:29035"/>
    </cofactor>
    <cofactor evidence="1">
        <name>Mg(2+)</name>
        <dbReference type="ChEBI" id="CHEBI:18420"/>
    </cofactor>
    <text evidence="1">Manganese or magnesium. Binds 1 divalent metal ion per monomer in the absence of substrate. May bind a second metal ion after substrate binding.</text>
</comment>
<comment type="subcellular location">
    <subcellularLocation>
        <location evidence="1">Cytoplasm</location>
    </subcellularLocation>
</comment>
<comment type="similarity">
    <text evidence="1">Belongs to the RNase HII family.</text>
</comment>
<reference key="1">
    <citation type="submission" date="2009-02" db="EMBL/GenBank/DDBJ databases">
        <title>Genome sequence of Bacillus cereus 03BB102.</title>
        <authorList>
            <person name="Dodson R.J."/>
            <person name="Jackson P."/>
            <person name="Munk A.C."/>
            <person name="Brettin T."/>
            <person name="Bruce D."/>
            <person name="Detter C."/>
            <person name="Tapia R."/>
            <person name="Han C."/>
            <person name="Sutton G."/>
            <person name="Sims D."/>
        </authorList>
    </citation>
    <scope>NUCLEOTIDE SEQUENCE [LARGE SCALE GENOMIC DNA]</scope>
    <source>
        <strain>03BB102</strain>
    </source>
</reference>
<organism>
    <name type="scientific">Bacillus cereus (strain 03BB102)</name>
    <dbReference type="NCBI Taxonomy" id="572264"/>
    <lineage>
        <taxon>Bacteria</taxon>
        <taxon>Bacillati</taxon>
        <taxon>Bacillota</taxon>
        <taxon>Bacilli</taxon>
        <taxon>Bacillales</taxon>
        <taxon>Bacillaceae</taxon>
        <taxon>Bacillus</taxon>
        <taxon>Bacillus cereus group</taxon>
    </lineage>
</organism>
<name>RNH2_BACC3</name>
<gene>
    <name evidence="1" type="primary">rnhB</name>
    <name type="ordered locus">BCA_3936</name>
</gene>
<protein>
    <recommendedName>
        <fullName evidence="1">Ribonuclease HII</fullName>
        <shortName evidence="1">RNase HII</shortName>
        <ecNumber evidence="1">3.1.26.4</ecNumber>
    </recommendedName>
</protein>
<accession>C1EP61</accession>
<sequence>MQKVTIQEAEHLLQEIMSEEDDRFQILIKDERKGVQKLILKWYKQKELAQKEKEKFLEMSKYENALREKGLTYIAGIDEVGRGPLAGPVVTAAVILPEDFYIPGLNDSKKLSEAKRERFYGEIKAKAIAIGVGIVSPQVIDEINIYQATKQAMLDAIANLSCTPEYLLIDAMKLPTPIPQTSIIKGDAKSISISAASIIAKVTRDRMMKELGEKYPAYGFEQHMGYGTKQHLEAIEAHGVLEEHRKSFAPIKDMIQK</sequence>
<evidence type="ECO:0000255" key="1">
    <source>
        <dbReference type="HAMAP-Rule" id="MF_00052"/>
    </source>
</evidence>
<evidence type="ECO:0000255" key="2">
    <source>
        <dbReference type="PROSITE-ProRule" id="PRU01319"/>
    </source>
</evidence>
<proteinExistence type="inferred from homology"/>
<keyword id="KW-0963">Cytoplasm</keyword>
<keyword id="KW-0255">Endonuclease</keyword>
<keyword id="KW-0378">Hydrolase</keyword>
<keyword id="KW-0464">Manganese</keyword>
<keyword id="KW-0479">Metal-binding</keyword>
<keyword id="KW-0540">Nuclease</keyword>
<feature type="chain" id="PRO_1000194442" description="Ribonuclease HII">
    <location>
        <begin position="1"/>
        <end position="257"/>
    </location>
</feature>
<feature type="domain" description="RNase H type-2" evidence="2">
    <location>
        <begin position="72"/>
        <end position="257"/>
    </location>
</feature>
<feature type="binding site" evidence="1">
    <location>
        <position position="78"/>
    </location>
    <ligand>
        <name>a divalent metal cation</name>
        <dbReference type="ChEBI" id="CHEBI:60240"/>
    </ligand>
</feature>
<feature type="binding site" evidence="1">
    <location>
        <position position="79"/>
    </location>
    <ligand>
        <name>a divalent metal cation</name>
        <dbReference type="ChEBI" id="CHEBI:60240"/>
    </ligand>
</feature>
<feature type="binding site" evidence="1">
    <location>
        <position position="170"/>
    </location>
    <ligand>
        <name>a divalent metal cation</name>
        <dbReference type="ChEBI" id="CHEBI:60240"/>
    </ligand>
</feature>